<name>YMFI_BACSU</name>
<dbReference type="EC" id="1.-.-.-"/>
<dbReference type="EMBL" id="AL009126">
    <property type="protein sequence ID" value="CAB13560.2"/>
    <property type="molecule type" value="Genomic_DNA"/>
</dbReference>
<dbReference type="RefSeq" id="WP_003244676.1">
    <property type="nucleotide sequence ID" value="NZ_OZ025638.1"/>
</dbReference>
<dbReference type="SMR" id="O31767"/>
<dbReference type="FunCoup" id="O31767">
    <property type="interactions" value="190"/>
</dbReference>
<dbReference type="STRING" id="224308.BSU16870"/>
<dbReference type="PaxDb" id="224308-BSU16870"/>
<dbReference type="EnsemblBacteria" id="CAB13560">
    <property type="protein sequence ID" value="CAB13560"/>
    <property type="gene ID" value="BSU_16870"/>
</dbReference>
<dbReference type="GeneID" id="939588"/>
<dbReference type="KEGG" id="bsu:BSU16870"/>
<dbReference type="PATRIC" id="fig|224308.179.peg.1828"/>
<dbReference type="eggNOG" id="COG0300">
    <property type="taxonomic scope" value="Bacteria"/>
</dbReference>
<dbReference type="InParanoid" id="O31767"/>
<dbReference type="OrthoDB" id="9803333at2"/>
<dbReference type="PhylomeDB" id="O31767"/>
<dbReference type="BioCyc" id="BSUB:BSU16870-MONOMER"/>
<dbReference type="Proteomes" id="UP000001570">
    <property type="component" value="Chromosome"/>
</dbReference>
<dbReference type="GO" id="GO:0016616">
    <property type="term" value="F:oxidoreductase activity, acting on the CH-OH group of donors, NAD or NADP as acceptor"/>
    <property type="evidence" value="ECO:0000318"/>
    <property type="project" value="GO_Central"/>
</dbReference>
<dbReference type="GO" id="GO:0030497">
    <property type="term" value="P:fatty acid elongation"/>
    <property type="evidence" value="ECO:0000318"/>
    <property type="project" value="GO_Central"/>
</dbReference>
<dbReference type="CDD" id="cd05233">
    <property type="entry name" value="SDR_c"/>
    <property type="match status" value="1"/>
</dbReference>
<dbReference type="FunFam" id="3.40.50.720:FF:000173">
    <property type="entry name" value="3-oxoacyl-[acyl-carrier protein] reductase"/>
    <property type="match status" value="1"/>
</dbReference>
<dbReference type="Gene3D" id="3.40.50.720">
    <property type="entry name" value="NAD(P)-binding Rossmann-like Domain"/>
    <property type="match status" value="1"/>
</dbReference>
<dbReference type="InterPro" id="IPR036291">
    <property type="entry name" value="NAD(P)-bd_dom_sf"/>
</dbReference>
<dbReference type="InterPro" id="IPR050259">
    <property type="entry name" value="SDR"/>
</dbReference>
<dbReference type="InterPro" id="IPR002347">
    <property type="entry name" value="SDR_fam"/>
</dbReference>
<dbReference type="NCBIfam" id="NF047420">
    <property type="entry name" value="EF_P_mod_YmfI"/>
    <property type="match status" value="1"/>
</dbReference>
<dbReference type="PANTHER" id="PTHR42879">
    <property type="entry name" value="3-OXOACYL-(ACYL-CARRIER-PROTEIN) REDUCTASE"/>
    <property type="match status" value="1"/>
</dbReference>
<dbReference type="PANTHER" id="PTHR42879:SF2">
    <property type="entry name" value="3-OXOACYL-[ACYL-CARRIER-PROTEIN] REDUCTASE FABG"/>
    <property type="match status" value="1"/>
</dbReference>
<dbReference type="Pfam" id="PF13561">
    <property type="entry name" value="adh_short_C2"/>
    <property type="match status" value="1"/>
</dbReference>
<dbReference type="PRINTS" id="PR00081">
    <property type="entry name" value="GDHRDH"/>
</dbReference>
<dbReference type="PRINTS" id="PR00080">
    <property type="entry name" value="SDRFAMILY"/>
</dbReference>
<dbReference type="SUPFAM" id="SSF51735">
    <property type="entry name" value="NAD(P)-binding Rossmann-fold domains"/>
    <property type="match status" value="1"/>
</dbReference>
<gene>
    <name type="primary">ymfI</name>
    <name type="ordered locus">BSU16870</name>
</gene>
<accession>O31767</accession>
<proteinExistence type="inferred from homology"/>
<reference key="1">
    <citation type="journal article" date="1997" name="Nature">
        <title>The complete genome sequence of the Gram-positive bacterium Bacillus subtilis.</title>
        <authorList>
            <person name="Kunst F."/>
            <person name="Ogasawara N."/>
            <person name="Moszer I."/>
            <person name="Albertini A.M."/>
            <person name="Alloni G."/>
            <person name="Azevedo V."/>
            <person name="Bertero M.G."/>
            <person name="Bessieres P."/>
            <person name="Bolotin A."/>
            <person name="Borchert S."/>
            <person name="Borriss R."/>
            <person name="Boursier L."/>
            <person name="Brans A."/>
            <person name="Braun M."/>
            <person name="Brignell S.C."/>
            <person name="Bron S."/>
            <person name="Brouillet S."/>
            <person name="Bruschi C.V."/>
            <person name="Caldwell B."/>
            <person name="Capuano V."/>
            <person name="Carter N.M."/>
            <person name="Choi S.-K."/>
            <person name="Codani J.-J."/>
            <person name="Connerton I.F."/>
            <person name="Cummings N.J."/>
            <person name="Daniel R.A."/>
            <person name="Denizot F."/>
            <person name="Devine K.M."/>
            <person name="Duesterhoeft A."/>
            <person name="Ehrlich S.D."/>
            <person name="Emmerson P.T."/>
            <person name="Entian K.-D."/>
            <person name="Errington J."/>
            <person name="Fabret C."/>
            <person name="Ferrari E."/>
            <person name="Foulger D."/>
            <person name="Fritz C."/>
            <person name="Fujita M."/>
            <person name="Fujita Y."/>
            <person name="Fuma S."/>
            <person name="Galizzi A."/>
            <person name="Galleron N."/>
            <person name="Ghim S.-Y."/>
            <person name="Glaser P."/>
            <person name="Goffeau A."/>
            <person name="Golightly E.J."/>
            <person name="Grandi G."/>
            <person name="Guiseppi G."/>
            <person name="Guy B.J."/>
            <person name="Haga K."/>
            <person name="Haiech J."/>
            <person name="Harwood C.R."/>
            <person name="Henaut A."/>
            <person name="Hilbert H."/>
            <person name="Holsappel S."/>
            <person name="Hosono S."/>
            <person name="Hullo M.-F."/>
            <person name="Itaya M."/>
            <person name="Jones L.-M."/>
            <person name="Joris B."/>
            <person name="Karamata D."/>
            <person name="Kasahara Y."/>
            <person name="Klaerr-Blanchard M."/>
            <person name="Klein C."/>
            <person name="Kobayashi Y."/>
            <person name="Koetter P."/>
            <person name="Koningstein G."/>
            <person name="Krogh S."/>
            <person name="Kumano M."/>
            <person name="Kurita K."/>
            <person name="Lapidus A."/>
            <person name="Lardinois S."/>
            <person name="Lauber J."/>
            <person name="Lazarevic V."/>
            <person name="Lee S.-M."/>
            <person name="Levine A."/>
            <person name="Liu H."/>
            <person name="Masuda S."/>
            <person name="Mauel C."/>
            <person name="Medigue C."/>
            <person name="Medina N."/>
            <person name="Mellado R.P."/>
            <person name="Mizuno M."/>
            <person name="Moestl D."/>
            <person name="Nakai S."/>
            <person name="Noback M."/>
            <person name="Noone D."/>
            <person name="O'Reilly M."/>
            <person name="Ogawa K."/>
            <person name="Ogiwara A."/>
            <person name="Oudega B."/>
            <person name="Park S.-H."/>
            <person name="Parro V."/>
            <person name="Pohl T.M."/>
            <person name="Portetelle D."/>
            <person name="Porwollik S."/>
            <person name="Prescott A.M."/>
            <person name="Presecan E."/>
            <person name="Pujic P."/>
            <person name="Purnelle B."/>
            <person name="Rapoport G."/>
            <person name="Rey M."/>
            <person name="Reynolds S."/>
            <person name="Rieger M."/>
            <person name="Rivolta C."/>
            <person name="Rocha E."/>
            <person name="Roche B."/>
            <person name="Rose M."/>
            <person name="Sadaie Y."/>
            <person name="Sato T."/>
            <person name="Scanlan E."/>
            <person name="Schleich S."/>
            <person name="Schroeter R."/>
            <person name="Scoffone F."/>
            <person name="Sekiguchi J."/>
            <person name="Sekowska A."/>
            <person name="Seror S.J."/>
            <person name="Serror P."/>
            <person name="Shin B.-S."/>
            <person name="Soldo B."/>
            <person name="Sorokin A."/>
            <person name="Tacconi E."/>
            <person name="Takagi T."/>
            <person name="Takahashi H."/>
            <person name="Takemaru K."/>
            <person name="Takeuchi M."/>
            <person name="Tamakoshi A."/>
            <person name="Tanaka T."/>
            <person name="Terpstra P."/>
            <person name="Tognoni A."/>
            <person name="Tosato V."/>
            <person name="Uchiyama S."/>
            <person name="Vandenbol M."/>
            <person name="Vannier F."/>
            <person name="Vassarotti A."/>
            <person name="Viari A."/>
            <person name="Wambutt R."/>
            <person name="Wedler E."/>
            <person name="Wedler H."/>
            <person name="Weitzenegger T."/>
            <person name="Winters P."/>
            <person name="Wipat A."/>
            <person name="Yamamoto H."/>
            <person name="Yamane K."/>
            <person name="Yasumoto K."/>
            <person name="Yata K."/>
            <person name="Yoshida K."/>
            <person name="Yoshikawa H.-F."/>
            <person name="Zumstein E."/>
            <person name="Yoshikawa H."/>
            <person name="Danchin A."/>
        </authorList>
    </citation>
    <scope>NUCLEOTIDE SEQUENCE [LARGE SCALE GENOMIC DNA]</scope>
    <source>
        <strain>168</strain>
    </source>
</reference>
<reference key="2">
    <citation type="journal article" date="2009" name="Microbiology">
        <title>From a consortium sequence to a unified sequence: the Bacillus subtilis 168 reference genome a decade later.</title>
        <authorList>
            <person name="Barbe V."/>
            <person name="Cruveiller S."/>
            <person name="Kunst F."/>
            <person name="Lenoble P."/>
            <person name="Meurice G."/>
            <person name="Sekowska A."/>
            <person name="Vallenet D."/>
            <person name="Wang T."/>
            <person name="Moszer I."/>
            <person name="Medigue C."/>
            <person name="Danchin A."/>
        </authorList>
    </citation>
    <scope>SEQUENCE REVISION TO 12; 209 AND 211</scope>
</reference>
<keyword id="KW-0560">Oxidoreductase</keyword>
<keyword id="KW-1185">Reference proteome</keyword>
<evidence type="ECO:0000250" key="1"/>
<evidence type="ECO:0000305" key="2"/>
<feature type="chain" id="PRO_0000376999" description="Uncharacterized oxidoreductase YmfI">
    <location>
        <begin position="1"/>
        <end position="242"/>
    </location>
</feature>
<feature type="active site" description="Proton acceptor" evidence="1">
    <location>
        <position position="150"/>
    </location>
</feature>
<feature type="binding site" evidence="1">
    <location>
        <begin position="8"/>
        <end position="15"/>
    </location>
    <ligand>
        <name>NADP(+)</name>
        <dbReference type="ChEBI" id="CHEBI:58349"/>
    </ligand>
</feature>
<feature type="binding site" evidence="1">
    <location>
        <position position="137"/>
    </location>
    <ligand>
        <name>substrate</name>
    </ligand>
</feature>
<comment type="similarity">
    <text evidence="2">Belongs to the short-chain dehydrogenases/reductases (SDR) family.</text>
</comment>
<sequence>MNKTALITGASGGIGKSISETLAARGYNLLLHYNTNQNAAAELAEKLSQMFGVNAEILQADLSAQDGADKLTSSIVQPIDAIVLNSGRSHFGLITDVDNATVQEMVQLHVASPYMLTRNLLPGMIRNKSGAIVAVSSIWGETGASCEVLYSMAKGAQHSFVKGLAKELAPSGIRVNAVAPGAVDTNMMNQFTPAEKEEIADEIPIGRLARPQEIADATAFLLSEKASYITGQILSVNGGWHC</sequence>
<protein>
    <recommendedName>
        <fullName>Uncharacterized oxidoreductase YmfI</fullName>
        <ecNumber>1.-.-.-</ecNumber>
    </recommendedName>
</protein>
<organism>
    <name type="scientific">Bacillus subtilis (strain 168)</name>
    <dbReference type="NCBI Taxonomy" id="224308"/>
    <lineage>
        <taxon>Bacteria</taxon>
        <taxon>Bacillati</taxon>
        <taxon>Bacillota</taxon>
        <taxon>Bacilli</taxon>
        <taxon>Bacillales</taxon>
        <taxon>Bacillaceae</taxon>
        <taxon>Bacillus</taxon>
    </lineage>
</organism>